<gene>
    <name evidence="1" type="primary">tsaD</name>
    <name type="synonym">gcp</name>
    <name type="ordered locus">KPK_0647</name>
</gene>
<proteinExistence type="inferred from homology"/>
<reference key="1">
    <citation type="journal article" date="2008" name="PLoS Genet.">
        <title>Complete genome sequence of the N2-fixing broad host range endophyte Klebsiella pneumoniae 342 and virulence predictions verified in mice.</title>
        <authorList>
            <person name="Fouts D.E."/>
            <person name="Tyler H.L."/>
            <person name="DeBoy R.T."/>
            <person name="Daugherty S."/>
            <person name="Ren Q."/>
            <person name="Badger J.H."/>
            <person name="Durkin A.S."/>
            <person name="Huot H."/>
            <person name="Shrivastava S."/>
            <person name="Kothari S."/>
            <person name="Dodson R.J."/>
            <person name="Mohamoud Y."/>
            <person name="Khouri H."/>
            <person name="Roesch L.F.W."/>
            <person name="Krogfelt K.A."/>
            <person name="Struve C."/>
            <person name="Triplett E.W."/>
            <person name="Methe B.A."/>
        </authorList>
    </citation>
    <scope>NUCLEOTIDE SEQUENCE [LARGE SCALE GENOMIC DNA]</scope>
    <source>
        <strain>342</strain>
    </source>
</reference>
<dbReference type="EC" id="2.3.1.234" evidence="1"/>
<dbReference type="EMBL" id="CP000964">
    <property type="protein sequence ID" value="ACI08558.1"/>
    <property type="molecule type" value="Genomic_DNA"/>
</dbReference>
<dbReference type="SMR" id="B5XU22"/>
<dbReference type="KEGG" id="kpe:KPK_0647"/>
<dbReference type="HOGENOM" id="CLU_023208_0_2_6"/>
<dbReference type="Proteomes" id="UP000001734">
    <property type="component" value="Chromosome"/>
</dbReference>
<dbReference type="GO" id="GO:0005737">
    <property type="term" value="C:cytoplasm"/>
    <property type="evidence" value="ECO:0007669"/>
    <property type="project" value="UniProtKB-SubCell"/>
</dbReference>
<dbReference type="GO" id="GO:0005506">
    <property type="term" value="F:iron ion binding"/>
    <property type="evidence" value="ECO:0007669"/>
    <property type="project" value="UniProtKB-UniRule"/>
</dbReference>
<dbReference type="GO" id="GO:0061711">
    <property type="term" value="F:N(6)-L-threonylcarbamoyladenine synthase activity"/>
    <property type="evidence" value="ECO:0007669"/>
    <property type="project" value="UniProtKB-EC"/>
</dbReference>
<dbReference type="GO" id="GO:0002949">
    <property type="term" value="P:tRNA threonylcarbamoyladenosine modification"/>
    <property type="evidence" value="ECO:0007669"/>
    <property type="project" value="UniProtKB-UniRule"/>
</dbReference>
<dbReference type="CDD" id="cd24133">
    <property type="entry name" value="ASKHA_NBD_TsaD_bac"/>
    <property type="match status" value="1"/>
</dbReference>
<dbReference type="FunFam" id="3.30.420.40:FF:000031">
    <property type="entry name" value="tRNA N6-adenosine threonylcarbamoyltransferase"/>
    <property type="match status" value="1"/>
</dbReference>
<dbReference type="Gene3D" id="3.30.420.40">
    <property type="match status" value="2"/>
</dbReference>
<dbReference type="HAMAP" id="MF_01445">
    <property type="entry name" value="TsaD"/>
    <property type="match status" value="1"/>
</dbReference>
<dbReference type="InterPro" id="IPR043129">
    <property type="entry name" value="ATPase_NBD"/>
</dbReference>
<dbReference type="InterPro" id="IPR000905">
    <property type="entry name" value="Gcp-like_dom"/>
</dbReference>
<dbReference type="InterPro" id="IPR017861">
    <property type="entry name" value="KAE1/TsaD"/>
</dbReference>
<dbReference type="InterPro" id="IPR017860">
    <property type="entry name" value="Peptidase_M22_CS"/>
</dbReference>
<dbReference type="InterPro" id="IPR022450">
    <property type="entry name" value="TsaD"/>
</dbReference>
<dbReference type="NCBIfam" id="TIGR00329">
    <property type="entry name" value="gcp_kae1"/>
    <property type="match status" value="1"/>
</dbReference>
<dbReference type="NCBIfam" id="TIGR03723">
    <property type="entry name" value="T6A_TsaD_YgjD"/>
    <property type="match status" value="1"/>
</dbReference>
<dbReference type="PANTHER" id="PTHR11735">
    <property type="entry name" value="TRNA N6-ADENOSINE THREONYLCARBAMOYLTRANSFERASE"/>
    <property type="match status" value="1"/>
</dbReference>
<dbReference type="PANTHER" id="PTHR11735:SF6">
    <property type="entry name" value="TRNA N6-ADENOSINE THREONYLCARBAMOYLTRANSFERASE, MITOCHONDRIAL"/>
    <property type="match status" value="1"/>
</dbReference>
<dbReference type="Pfam" id="PF00814">
    <property type="entry name" value="TsaD"/>
    <property type="match status" value="1"/>
</dbReference>
<dbReference type="PRINTS" id="PR00789">
    <property type="entry name" value="OSIALOPTASE"/>
</dbReference>
<dbReference type="SUPFAM" id="SSF53067">
    <property type="entry name" value="Actin-like ATPase domain"/>
    <property type="match status" value="2"/>
</dbReference>
<dbReference type="PROSITE" id="PS01016">
    <property type="entry name" value="GLYCOPROTEASE"/>
    <property type="match status" value="1"/>
</dbReference>
<comment type="function">
    <text evidence="1">Required for the formation of a threonylcarbamoyl group on adenosine at position 37 (t(6)A37) in tRNAs that read codons beginning with adenine. Is involved in the transfer of the threonylcarbamoyl moiety of threonylcarbamoyl-AMP (TC-AMP) to the N6 group of A37, together with TsaE and TsaB. TsaD likely plays a direct catalytic role in this reaction.</text>
</comment>
<comment type="catalytic activity">
    <reaction evidence="1">
        <text>L-threonylcarbamoyladenylate + adenosine(37) in tRNA = N(6)-L-threonylcarbamoyladenosine(37) in tRNA + AMP + H(+)</text>
        <dbReference type="Rhea" id="RHEA:37059"/>
        <dbReference type="Rhea" id="RHEA-COMP:10162"/>
        <dbReference type="Rhea" id="RHEA-COMP:10163"/>
        <dbReference type="ChEBI" id="CHEBI:15378"/>
        <dbReference type="ChEBI" id="CHEBI:73682"/>
        <dbReference type="ChEBI" id="CHEBI:74411"/>
        <dbReference type="ChEBI" id="CHEBI:74418"/>
        <dbReference type="ChEBI" id="CHEBI:456215"/>
        <dbReference type="EC" id="2.3.1.234"/>
    </reaction>
</comment>
<comment type="cofactor">
    <cofactor evidence="1">
        <name>Fe(2+)</name>
        <dbReference type="ChEBI" id="CHEBI:29033"/>
    </cofactor>
    <text evidence="1">Binds 1 Fe(2+) ion per subunit.</text>
</comment>
<comment type="subcellular location">
    <subcellularLocation>
        <location evidence="1">Cytoplasm</location>
    </subcellularLocation>
</comment>
<comment type="similarity">
    <text evidence="1">Belongs to the KAE1 / TsaD family.</text>
</comment>
<protein>
    <recommendedName>
        <fullName evidence="1">tRNA N6-adenosine threonylcarbamoyltransferase</fullName>
        <ecNumber evidence="1">2.3.1.234</ecNumber>
    </recommendedName>
    <alternativeName>
        <fullName evidence="1">N6-L-threonylcarbamoyladenine synthase</fullName>
        <shortName evidence="1">t(6)A synthase</shortName>
    </alternativeName>
    <alternativeName>
        <fullName evidence="1">t(6)A37 threonylcarbamoyladenosine biosynthesis protein TsaD</fullName>
    </alternativeName>
    <alternativeName>
        <fullName evidence="1">tRNA threonylcarbamoyladenosine biosynthesis protein TsaD</fullName>
    </alternativeName>
</protein>
<accession>B5XU22</accession>
<name>TSAD_KLEP3</name>
<feature type="chain" id="PRO_1000145989" description="tRNA N6-adenosine threonylcarbamoyltransferase">
    <location>
        <begin position="1"/>
        <end position="337"/>
    </location>
</feature>
<feature type="binding site" evidence="1">
    <location>
        <position position="111"/>
    </location>
    <ligand>
        <name>Fe cation</name>
        <dbReference type="ChEBI" id="CHEBI:24875"/>
    </ligand>
</feature>
<feature type="binding site" evidence="1">
    <location>
        <position position="115"/>
    </location>
    <ligand>
        <name>Fe cation</name>
        <dbReference type="ChEBI" id="CHEBI:24875"/>
    </ligand>
</feature>
<feature type="binding site" evidence="1">
    <location>
        <begin position="134"/>
        <end position="138"/>
    </location>
    <ligand>
        <name>substrate</name>
    </ligand>
</feature>
<feature type="binding site" evidence="1">
    <location>
        <position position="167"/>
    </location>
    <ligand>
        <name>substrate</name>
    </ligand>
</feature>
<feature type="binding site" evidence="1">
    <location>
        <position position="180"/>
    </location>
    <ligand>
        <name>substrate</name>
    </ligand>
</feature>
<feature type="binding site" evidence="1">
    <location>
        <position position="272"/>
    </location>
    <ligand>
        <name>substrate</name>
    </ligand>
</feature>
<feature type="binding site" evidence="1">
    <location>
        <position position="300"/>
    </location>
    <ligand>
        <name>Fe cation</name>
        <dbReference type="ChEBI" id="CHEBI:24875"/>
    </ligand>
</feature>
<sequence>MRVLGIETSCDETGIAIYDDQQGLLANQLYSQVKLHADYGGVVPELASRDHVRKTVPLIQAALKEAGLTAKDIDAVAYTAGPGLVGALLVGATVGRSLAFAWNVPAIPVHHMEGHLLAPMLEDNPPAFPFVALLVSGGHTQLISVTGIGQYELLGESIDDAAGEAFDKTAKLLGLDYPGGPMLSKMAAQGTEGRFVFPRPMTDRPGLDFSFSGLKTFAANTIRNNGDDEQTRADIARAFEDAVVDTLMIKCRRALEQTGFKRLVMAGGVSANRTLRAKLAEMMQKRGGEVFYARPEFCTDNGAMIAYAGMVRLQTGAKAELGVTVRPRWPLAELPAA</sequence>
<organism>
    <name type="scientific">Klebsiella pneumoniae (strain 342)</name>
    <dbReference type="NCBI Taxonomy" id="507522"/>
    <lineage>
        <taxon>Bacteria</taxon>
        <taxon>Pseudomonadati</taxon>
        <taxon>Pseudomonadota</taxon>
        <taxon>Gammaproteobacteria</taxon>
        <taxon>Enterobacterales</taxon>
        <taxon>Enterobacteriaceae</taxon>
        <taxon>Klebsiella/Raoultella group</taxon>
        <taxon>Klebsiella</taxon>
        <taxon>Klebsiella pneumoniae complex</taxon>
    </lineage>
</organism>
<evidence type="ECO:0000255" key="1">
    <source>
        <dbReference type="HAMAP-Rule" id="MF_01445"/>
    </source>
</evidence>
<keyword id="KW-0012">Acyltransferase</keyword>
<keyword id="KW-0963">Cytoplasm</keyword>
<keyword id="KW-0408">Iron</keyword>
<keyword id="KW-0479">Metal-binding</keyword>
<keyword id="KW-0808">Transferase</keyword>
<keyword id="KW-0819">tRNA processing</keyword>